<accession>H7C8I3</accession>
<gene>
    <name evidence="6" type="primary">larA</name>
</gene>
<evidence type="ECO:0000250" key="1">
    <source>
        <dbReference type="UniProtKB" id="P0DQM5"/>
    </source>
</evidence>
<evidence type="ECO:0000269" key="2">
    <source>
    </source>
</evidence>
<evidence type="ECO:0000269" key="3">
    <source>
    </source>
</evidence>
<evidence type="ECO:0000269" key="4">
    <source>
    </source>
</evidence>
<evidence type="ECO:0000303" key="5">
    <source>
    </source>
</evidence>
<evidence type="ECO:0000303" key="6">
    <source>
    </source>
</evidence>
<evidence type="ECO:0000305" key="7">
    <source>
    </source>
</evidence>
<evidence type="ECO:0000305" key="8">
    <source>
    </source>
</evidence>
<evidence type="ECO:0000305" key="9">
    <source>
    </source>
</evidence>
<name>LARIA_RHOJO</name>
<keyword id="KW-0044">Antibiotic</keyword>
<keyword id="KW-0929">Antimicrobial</keyword>
<keyword id="KW-0078">Bacteriocin</keyword>
<keyword id="KW-0903">Direct protein sequencing</keyword>
<keyword id="KW-1017">Isopeptide bond</keyword>
<dbReference type="EMBL" id="AB593691">
    <property type="protein sequence ID" value="BAL72546.1"/>
    <property type="molecule type" value="Genomic_DNA"/>
</dbReference>
<dbReference type="GO" id="GO:0042742">
    <property type="term" value="P:defense response to bacterium"/>
    <property type="evidence" value="ECO:0007669"/>
    <property type="project" value="UniProtKB-KW"/>
</dbReference>
<dbReference type="GO" id="GO:0031640">
    <property type="term" value="P:killing of cells of another organism"/>
    <property type="evidence" value="ECO:0007669"/>
    <property type="project" value="UniProtKB-KW"/>
</dbReference>
<sequence length="46" mass="5075">MTSQPSKKTYNAPSLVQRGKFARTTAGSQLVYREWVGHSNVIKPGP</sequence>
<protein>
    <recommendedName>
        <fullName evidence="5">Lariatin</fullName>
    </recommendedName>
    <alternativeName>
        <fullName evidence="5">Class II lasso peptide</fullName>
    </alternativeName>
    <alternativeName>
        <fullName evidence="1">Lariat peptide</fullName>
    </alternativeName>
    <alternativeName>
        <fullName evidence="1">Ribosomally synthesized and post-translationally modified peptide</fullName>
        <shortName evidence="1">RiPP</shortName>
    </alternativeName>
    <component>
        <recommendedName>
            <fullName evidence="5">Lariatin-A</fullName>
        </recommendedName>
    </component>
    <component>
        <recommendedName>
            <fullName evidence="5">Lariatin-B</fullName>
        </recommendedName>
    </component>
</protein>
<proteinExistence type="evidence at protein level"/>
<feature type="propeptide" id="PRO_0000450655" evidence="9">
    <location>
        <begin position="1"/>
        <end position="26"/>
    </location>
</feature>
<feature type="peptide" id="PRO_0000450656" description="Lariatin-B" evidence="3">
    <location>
        <begin position="27"/>
        <end position="46"/>
    </location>
</feature>
<feature type="peptide" id="PRO_0000450657" description="Lariatin-A" evidence="2 3">
    <location>
        <begin position="27"/>
        <end position="44"/>
    </location>
</feature>
<feature type="site" description="Important in resistance to hydrolysis" evidence="8">
    <location>
        <begin position="43"/>
        <end position="44"/>
    </location>
</feature>
<feature type="cross-link" description="Isoglutamyl glycine isopeptide (Gly-Glu)" evidence="2">
    <location>
        <begin position="27"/>
        <end position="34"/>
    </location>
</feature>
<feature type="mutagenesis site" description="Loss of antibacterial activity." evidence="4">
    <location>
        <begin position="43"/>
        <end position="46"/>
    </location>
</feature>
<feature type="mutagenesis site" description="No change in antibacterial activity." evidence="4">
    <location>
        <begin position="44"/>
        <end position="46"/>
    </location>
</feature>
<comment type="function">
    <molecule>Lariatin-A</molecule>
    <text evidence="3">Peptide antibiotic with selective activity against Mycobacterium species (M.smegmatis, MIC=3.13 ug/ml and M.tuberculosis, MIC=0.39 ug/ml). it is plausible that the target of lariatins lies within the cell wall in mycobacteria.</text>
</comment>
<comment type="function">
    <molecule>Lariatin-B</molecule>
    <text evidence="3">Peptide antibiotic with selective activity against Mycobacterium species (M.smegmatis, MIC=6.25 ug/ml).</text>
</comment>
<comment type="domain">
    <text evidence="7">Is composed of a ring composed by 8 residues, and a tail of 10 or 12 residues (Probable). The peptide is threaded when the C-terminal tail is inserted throught the isopeptide-bonded ring (Probable).</text>
</comment>
<comment type="PTM">
    <text evidence="9">The linear precursor LarA is probably cleaved by the putative peptidase LarD, generating linear 18-residue Lariatin-A or 20-residue Lariatin-B. These linear peptides are probably cross-linked by LarB. Finally, lariatins A and B may be exported by ABC transporter LarE.</text>
</comment>
<comment type="mass spectrometry" mass="2051.0" method="FAB" evidence="3">
    <molecule>Lariatin-A</molecule>
</comment>
<comment type="mass spectrometry" mass="2205.0" method="FAB" evidence="3">
    <molecule>Lariatin-B</molecule>
</comment>
<organism>
    <name type="scientific">Rhodococcus jostii</name>
    <dbReference type="NCBI Taxonomy" id="132919"/>
    <lineage>
        <taxon>Bacteria</taxon>
        <taxon>Bacillati</taxon>
        <taxon>Actinomycetota</taxon>
        <taxon>Actinomycetes</taxon>
        <taxon>Mycobacteriales</taxon>
        <taxon>Nocardiaceae</taxon>
        <taxon>Rhodococcus</taxon>
    </lineage>
</organism>
<reference key="1">
    <citation type="journal article" date="2012" name="Appl. Microbiol. Biotechnol.">
        <title>Molecular cloning of the gene cluster for lariatin biosynthesis of Rhodococcus jostii K01-B0171.</title>
        <authorList>
            <person name="Inokoshi J."/>
            <person name="Matsuhama M."/>
            <person name="Miyake M."/>
            <person name="Ikeda H."/>
            <person name="Tomoda H."/>
        </authorList>
    </citation>
    <scope>NUCLEOTIDE SEQUENCE [GENOMIC DNA]</scope>
    <source>
        <strain>K01-B0171</strain>
    </source>
</reference>
<reference key="2">
    <citation type="journal article" date="2007" name="J. Antibiot.">
        <title>Lariatins, novel anti-mycobacterial peptides with a lasso structure, produced by Rhodococcus jostii K01-B0171.</title>
        <authorList>
            <person name="Iwatsuki M."/>
            <person name="Uchida R."/>
            <person name="Takakusagi Y."/>
            <person name="Matsumoto A."/>
            <person name="Jiang C.L."/>
            <person name="Takahashi Y."/>
            <person name="Arai M."/>
            <person name="Kobayashi S."/>
            <person name="Matsumoto M."/>
            <person name="Inokoshi J."/>
            <person name="Tomoda H."/>
            <person name="Omura S."/>
        </authorList>
    </citation>
    <scope>FUNCTION</scope>
    <scope>MASS SPECTROMETRY</scope>
    <source>
        <strain>K01-B0171</strain>
    </source>
</reference>
<reference key="3">
    <citation type="journal article" date="2009" name="Bioorg. Med. Chem. Lett.">
        <title>Lys17 in the 'lasso' peptide lariatin A is responsible for anti-mycobacterial activity.</title>
        <authorList>
            <person name="Iwatsuki M."/>
            <person name="Koizumi Y."/>
            <person name="Gouda H."/>
            <person name="Hirono S."/>
            <person name="Tomoda H."/>
            <person name="Omura S."/>
        </authorList>
    </citation>
    <scope>MUTAGENESIS OF 43-LYS--PRO-46 AND 44-PRO--PRO-46</scope>
</reference>
<reference key="4">
    <citation type="journal article" date="2006" name="J. Am. Chem. Soc.">
        <title>Lariatins, antimycobacterial peptides produced by Rhodococcus sp. K01-B0171, have a lasso structure.</title>
        <authorList>
            <person name="Iwatsuki M."/>
            <person name="Tomoda H."/>
            <person name="Uchida R."/>
            <person name="Gouda H."/>
            <person name="Hirono S."/>
            <person name="Omura S."/>
        </authorList>
    </citation>
    <scope>STRUCTURE BY NMR OF 27-44</scope>
    <scope>PRELIMINARY PROTEIN SEQUENCE OF 27-44</scope>
    <scope>CROSS-LINK</scope>
    <source>
        <strain>K01-B0171</strain>
    </source>
</reference>